<accession>A1L4X7</accession>
<accession>Q9SR16</accession>
<gene>
    <name evidence="6" type="primary">AHL14</name>
    <name evidence="8" type="ordered locus">At3g04590</name>
    <name evidence="9" type="ORF">F7O18.6</name>
</gene>
<proteinExistence type="evidence at protein level"/>
<organism evidence="10">
    <name type="scientific">Arabidopsis thaliana</name>
    <name type="common">Mouse-ear cress</name>
    <dbReference type="NCBI Taxonomy" id="3702"/>
    <lineage>
        <taxon>Eukaryota</taxon>
        <taxon>Viridiplantae</taxon>
        <taxon>Streptophyta</taxon>
        <taxon>Embryophyta</taxon>
        <taxon>Tracheophyta</taxon>
        <taxon>Spermatophyta</taxon>
        <taxon>Magnoliopsida</taxon>
        <taxon>eudicotyledons</taxon>
        <taxon>Gunneridae</taxon>
        <taxon>Pentapetalae</taxon>
        <taxon>rosids</taxon>
        <taxon>malvids</taxon>
        <taxon>Brassicales</taxon>
        <taxon>Brassicaceae</taxon>
        <taxon>Camelineae</taxon>
        <taxon>Arabidopsis</taxon>
    </lineage>
</organism>
<reference key="1">
    <citation type="journal article" date="2000" name="Nature">
        <title>Sequence and analysis of chromosome 3 of the plant Arabidopsis thaliana.</title>
        <authorList>
            <person name="Salanoubat M."/>
            <person name="Lemcke K."/>
            <person name="Rieger M."/>
            <person name="Ansorge W."/>
            <person name="Unseld M."/>
            <person name="Fartmann B."/>
            <person name="Valle G."/>
            <person name="Bloecker H."/>
            <person name="Perez-Alonso M."/>
            <person name="Obermaier B."/>
            <person name="Delseny M."/>
            <person name="Boutry M."/>
            <person name="Grivell L.A."/>
            <person name="Mache R."/>
            <person name="Puigdomenech P."/>
            <person name="De Simone V."/>
            <person name="Choisne N."/>
            <person name="Artiguenave F."/>
            <person name="Robert C."/>
            <person name="Brottier P."/>
            <person name="Wincker P."/>
            <person name="Cattolico L."/>
            <person name="Weissenbach J."/>
            <person name="Saurin W."/>
            <person name="Quetier F."/>
            <person name="Schaefer M."/>
            <person name="Mueller-Auer S."/>
            <person name="Gabel C."/>
            <person name="Fuchs M."/>
            <person name="Benes V."/>
            <person name="Wurmbach E."/>
            <person name="Drzonek H."/>
            <person name="Erfle H."/>
            <person name="Jordan N."/>
            <person name="Bangert S."/>
            <person name="Wiedelmann R."/>
            <person name="Kranz H."/>
            <person name="Voss H."/>
            <person name="Holland R."/>
            <person name="Brandt P."/>
            <person name="Nyakatura G."/>
            <person name="Vezzi A."/>
            <person name="D'Angelo M."/>
            <person name="Pallavicini A."/>
            <person name="Toppo S."/>
            <person name="Simionati B."/>
            <person name="Conrad A."/>
            <person name="Hornischer K."/>
            <person name="Kauer G."/>
            <person name="Loehnert T.-H."/>
            <person name="Nordsiek G."/>
            <person name="Reichelt J."/>
            <person name="Scharfe M."/>
            <person name="Schoen O."/>
            <person name="Bargues M."/>
            <person name="Terol J."/>
            <person name="Climent J."/>
            <person name="Navarro P."/>
            <person name="Collado C."/>
            <person name="Perez-Perez A."/>
            <person name="Ottenwaelder B."/>
            <person name="Duchemin D."/>
            <person name="Cooke R."/>
            <person name="Laudie M."/>
            <person name="Berger-Llauro C."/>
            <person name="Purnelle B."/>
            <person name="Masuy D."/>
            <person name="de Haan M."/>
            <person name="Maarse A.C."/>
            <person name="Alcaraz J.-P."/>
            <person name="Cottet A."/>
            <person name="Casacuberta E."/>
            <person name="Monfort A."/>
            <person name="Argiriou A."/>
            <person name="Flores M."/>
            <person name="Liguori R."/>
            <person name="Vitale D."/>
            <person name="Mannhaupt G."/>
            <person name="Haase D."/>
            <person name="Schoof H."/>
            <person name="Rudd S."/>
            <person name="Zaccaria P."/>
            <person name="Mewes H.-W."/>
            <person name="Mayer K.F.X."/>
            <person name="Kaul S."/>
            <person name="Town C.D."/>
            <person name="Koo H.L."/>
            <person name="Tallon L.J."/>
            <person name="Jenkins J."/>
            <person name="Rooney T."/>
            <person name="Rizzo M."/>
            <person name="Walts A."/>
            <person name="Utterback T."/>
            <person name="Fujii C.Y."/>
            <person name="Shea T.P."/>
            <person name="Creasy T.H."/>
            <person name="Haas B."/>
            <person name="Maiti R."/>
            <person name="Wu D."/>
            <person name="Peterson J."/>
            <person name="Van Aken S."/>
            <person name="Pai G."/>
            <person name="Militscher J."/>
            <person name="Sellers P."/>
            <person name="Gill J.E."/>
            <person name="Feldblyum T.V."/>
            <person name="Preuss D."/>
            <person name="Lin X."/>
            <person name="Nierman W.C."/>
            <person name="Salzberg S.L."/>
            <person name="White O."/>
            <person name="Venter J.C."/>
            <person name="Fraser C.M."/>
            <person name="Kaneko T."/>
            <person name="Nakamura Y."/>
            <person name="Sato S."/>
            <person name="Kato T."/>
            <person name="Asamizu E."/>
            <person name="Sasamoto S."/>
            <person name="Kimura T."/>
            <person name="Idesawa K."/>
            <person name="Kawashima K."/>
            <person name="Kishida Y."/>
            <person name="Kiyokawa C."/>
            <person name="Kohara M."/>
            <person name="Matsumoto M."/>
            <person name="Matsuno A."/>
            <person name="Muraki A."/>
            <person name="Nakayama S."/>
            <person name="Nakazaki N."/>
            <person name="Shinpo S."/>
            <person name="Takeuchi C."/>
            <person name="Wada T."/>
            <person name="Watanabe A."/>
            <person name="Yamada M."/>
            <person name="Yasuda M."/>
            <person name="Tabata S."/>
        </authorList>
    </citation>
    <scope>NUCLEOTIDE SEQUENCE [LARGE SCALE GENOMIC DNA]</scope>
    <source>
        <strain>cv. Columbia</strain>
    </source>
</reference>
<reference key="2">
    <citation type="journal article" date="2017" name="Plant J.">
        <title>Araport11: a complete reannotation of the Arabidopsis thaliana reference genome.</title>
        <authorList>
            <person name="Cheng C.Y."/>
            <person name="Krishnakumar V."/>
            <person name="Chan A.P."/>
            <person name="Thibaud-Nissen F."/>
            <person name="Schobel S."/>
            <person name="Town C.D."/>
        </authorList>
    </citation>
    <scope>GENOME REANNOTATION</scope>
    <source>
        <strain>cv. Columbia</strain>
    </source>
</reference>
<reference key="3">
    <citation type="submission" date="2006-12" db="EMBL/GenBank/DDBJ databases">
        <title>Arabidopsis ORF clones.</title>
        <authorList>
            <person name="Bautista V.R."/>
            <person name="Kim C.J."/>
            <person name="Chen H."/>
            <person name="Wu S.Y."/>
            <person name="De Los Reyes C."/>
            <person name="Ecker J.R."/>
        </authorList>
    </citation>
    <scope>NUCLEOTIDE SEQUENCE [LARGE SCALE MRNA]</scope>
    <source>
        <strain>cv. Columbia</strain>
    </source>
</reference>
<reference key="4">
    <citation type="submission" date="2009-03" db="EMBL/GenBank/DDBJ databases">
        <title>ORF cloning and analysis of Arabidopsis transcription factor genes.</title>
        <authorList>
            <person name="Fujita M."/>
            <person name="Mizukado S."/>
            <person name="Seki M."/>
            <person name="Shinozaki K."/>
            <person name="Mitsuda N."/>
            <person name="Takiguchi Y."/>
            <person name="Takagi M."/>
        </authorList>
    </citation>
    <scope>NUCLEOTIDE SEQUENCE [LARGE SCALE MRNA]</scope>
</reference>
<reference key="5">
    <citation type="journal article" date="2004" name="Plant Mol. Biol.">
        <title>Identification of a novel plant MAR DNA binding protein localized on chromosomal surfaces.</title>
        <authorList>
            <person name="Fujimoto S."/>
            <person name="Matsunaga S."/>
            <person name="Yonemura M."/>
            <person name="Uchiyama S."/>
            <person name="Azuma T."/>
            <person name="Fukui K."/>
        </authorList>
    </citation>
    <scope>IDENTIFICATION</scope>
    <scope>GENE FAMILY</scope>
    <scope>NOMENCLATURE</scope>
    <source>
        <strain>cv. Columbia</strain>
    </source>
</reference>
<reference key="6">
    <citation type="journal article" date="2009" name="Plant Physiol.">
        <title>Large-scale Arabidopsis phosphoproteome profiling reveals novel chloroplast kinase substrates and phosphorylation networks.</title>
        <authorList>
            <person name="Reiland S."/>
            <person name="Messerli G."/>
            <person name="Baerenfaller K."/>
            <person name="Gerrits B."/>
            <person name="Endler A."/>
            <person name="Grossmann J."/>
            <person name="Gruissem W."/>
            <person name="Baginsky S."/>
        </authorList>
    </citation>
    <scope>IDENTIFICATION BY MASS SPECTROMETRY [LARGE SCALE ANALYSIS]</scope>
</reference>
<reference key="7">
    <citation type="journal article" date="2013" name="Proc. Natl. Acad. Sci. U.S.A.">
        <title>Arabidopsis thaliana AHL family modulates hypocotyl growth redundantly by interacting with each other via the PPC/DUF296 domain.</title>
        <authorList>
            <person name="Zhao J."/>
            <person name="Favero D.S."/>
            <person name="Peng H."/>
            <person name="Neff M.M."/>
        </authorList>
    </citation>
    <scope>GENE FAMILY</scope>
    <scope>DOMAIN PPC</scope>
</reference>
<evidence type="ECO:0000250" key="1">
    <source>
        <dbReference type="UniProtKB" id="Q8VYJ2"/>
    </source>
</evidence>
<evidence type="ECO:0000255" key="2"/>
<evidence type="ECO:0000255" key="3">
    <source>
        <dbReference type="PROSITE-ProRule" id="PRU01078"/>
    </source>
</evidence>
<evidence type="ECO:0000256" key="4">
    <source>
        <dbReference type="SAM" id="MobiDB-lite"/>
    </source>
</evidence>
<evidence type="ECO:0000269" key="5">
    <source>
    </source>
</evidence>
<evidence type="ECO:0000303" key="6">
    <source>
    </source>
</evidence>
<evidence type="ECO:0000305" key="7"/>
<evidence type="ECO:0000312" key="8">
    <source>
        <dbReference type="Araport" id="AT3G04590"/>
    </source>
</evidence>
<evidence type="ECO:0000312" key="9">
    <source>
        <dbReference type="EMBL" id="AAF04889.1"/>
    </source>
</evidence>
<evidence type="ECO:0000312" key="10">
    <source>
        <dbReference type="EMBL" id="ABM06034.1"/>
    </source>
</evidence>
<evidence type="ECO:0000312" key="11">
    <source>
        <dbReference type="EMBL" id="FAA00285.1"/>
    </source>
</evidence>
<keyword id="KW-0025">Alternative splicing</keyword>
<keyword id="KW-0238">DNA-binding</keyword>
<keyword id="KW-0539">Nucleus</keyword>
<keyword id="KW-1185">Reference proteome</keyword>
<keyword id="KW-0804">Transcription</keyword>
<keyword id="KW-0805">Transcription regulation</keyword>
<sequence>MDPNESHHHHQQQQLHHLHQQQQQQQQQQRLTSPYFHHQLQHHHHLPTTVATTASTGNAVPSSNNGLFPPQPQPQHQPNDGSSSLAVYPHSVPSSAVTAPMEPVKRKRGRPRKYVTPEQALAAKKLASSASSSSAKQRRELAAVTGGTVSTNSGSSKKSQLGSVGKTGQCFTPHIVNIAPGEDVVQKIMMFANQSKHELCVLSASGTISNASLRQPAPSGGNLPYEGQYEILSLSGSYIRTEQGGKSGGLSVSLSASDGQIIGGAIGSHLTAAGPVQVILGTFQLDRKKDAAGSGGKGDASNSGSRLTSPVSSGQLLGMGFPPGMESTGRNPMRGNDEQHDHHHHQAGLGGPHHFMMQAPQGIHMTHSRPSEWRGGGNSGHDGRGGGGYDLSGRIGHESSENGDYEQQIPD</sequence>
<name>AHL14_ARATH</name>
<dbReference type="EMBL" id="AC011437">
    <property type="protein sequence ID" value="AAF04889.1"/>
    <property type="status" value="ALT_SEQ"/>
    <property type="molecule type" value="Genomic_DNA"/>
</dbReference>
<dbReference type="EMBL" id="CP002686">
    <property type="protein sequence ID" value="AEE74102.1"/>
    <property type="molecule type" value="Genomic_DNA"/>
</dbReference>
<dbReference type="EMBL" id="BT029764">
    <property type="protein sequence ID" value="ABM06034.1"/>
    <property type="molecule type" value="mRNA"/>
</dbReference>
<dbReference type="EMBL" id="AB493600">
    <property type="protein sequence ID" value="BAH30438.1"/>
    <property type="molecule type" value="mRNA"/>
</dbReference>
<dbReference type="EMBL" id="BR000350">
    <property type="protein sequence ID" value="FAA00285.1"/>
    <property type="status" value="ALT_SEQ"/>
    <property type="molecule type" value="mRNA"/>
</dbReference>
<dbReference type="RefSeq" id="NP_187109.2">
    <molecule id="A1L4X7-1"/>
    <property type="nucleotide sequence ID" value="NM_111330.5"/>
</dbReference>
<dbReference type="SMR" id="A1L4X7"/>
<dbReference type="FunCoup" id="A1L4X7">
    <property type="interactions" value="208"/>
</dbReference>
<dbReference type="STRING" id="3702.A1L4X7"/>
<dbReference type="iPTMnet" id="A1L4X7"/>
<dbReference type="PaxDb" id="3702-AT3G04590.2"/>
<dbReference type="ProteomicsDB" id="244893">
    <molecule id="A1L4X7-1"/>
</dbReference>
<dbReference type="EnsemblPlants" id="AT3G04590.2">
    <molecule id="A1L4X7-1"/>
    <property type="protein sequence ID" value="AT3G04590.2"/>
    <property type="gene ID" value="AT3G04590"/>
</dbReference>
<dbReference type="GeneID" id="819615"/>
<dbReference type="Gramene" id="AT3G04590.2">
    <molecule id="A1L4X7-1"/>
    <property type="protein sequence ID" value="AT3G04590.2"/>
    <property type="gene ID" value="AT3G04590"/>
</dbReference>
<dbReference type="KEGG" id="ath:AT3G04590"/>
<dbReference type="Araport" id="AT3G04590"/>
<dbReference type="TAIR" id="AT3G04590">
    <property type="gene designation" value="AHL14"/>
</dbReference>
<dbReference type="eggNOG" id="ENOG502QVTT">
    <property type="taxonomic scope" value="Eukaryota"/>
</dbReference>
<dbReference type="InParanoid" id="A1L4X7"/>
<dbReference type="PhylomeDB" id="A1L4X7"/>
<dbReference type="PRO" id="PR:A1L4X7"/>
<dbReference type="Proteomes" id="UP000006548">
    <property type="component" value="Chromosome 3"/>
</dbReference>
<dbReference type="ExpressionAtlas" id="A1L4X7">
    <property type="expression patterns" value="baseline and differential"/>
</dbReference>
<dbReference type="GO" id="GO:0005634">
    <property type="term" value="C:nucleus"/>
    <property type="evidence" value="ECO:0007669"/>
    <property type="project" value="UniProtKB-SubCell"/>
</dbReference>
<dbReference type="GO" id="GO:0003680">
    <property type="term" value="F:minor groove of adenine-thymine-rich DNA binding"/>
    <property type="evidence" value="ECO:0007669"/>
    <property type="project" value="InterPro"/>
</dbReference>
<dbReference type="CDD" id="cd11378">
    <property type="entry name" value="DUF296"/>
    <property type="match status" value="1"/>
</dbReference>
<dbReference type="Gene3D" id="3.30.1330.80">
    <property type="entry name" value="Hypothetical protein, similar to alpha- acetolactate decarboxylase, domain 2"/>
    <property type="match status" value="1"/>
</dbReference>
<dbReference type="InterPro" id="IPR039605">
    <property type="entry name" value="AHL"/>
</dbReference>
<dbReference type="InterPro" id="IPR005175">
    <property type="entry name" value="PPC_dom"/>
</dbReference>
<dbReference type="PANTHER" id="PTHR31500:SF68">
    <property type="entry name" value="AT-HOOK MOTIF NUCLEAR-LOCALIZED PROTEIN 14"/>
    <property type="match status" value="1"/>
</dbReference>
<dbReference type="PANTHER" id="PTHR31500">
    <property type="entry name" value="AT-HOOK MOTIF NUCLEAR-LOCALIZED PROTEIN 9"/>
    <property type="match status" value="1"/>
</dbReference>
<dbReference type="Pfam" id="PF03479">
    <property type="entry name" value="PCC"/>
    <property type="match status" value="1"/>
</dbReference>
<dbReference type="SUPFAM" id="SSF117856">
    <property type="entry name" value="AF0104/ALDC/Ptd012-like"/>
    <property type="match status" value="1"/>
</dbReference>
<dbReference type="PROSITE" id="PS51742">
    <property type="entry name" value="PPC"/>
    <property type="match status" value="1"/>
</dbReference>
<comment type="function">
    <text evidence="1">Transcription factor that specifically binds AT-rich DNA sequences related to the nuclear matrix attachment regions (MARs).</text>
</comment>
<comment type="subcellular location">
    <subcellularLocation>
        <location evidence="1">Nucleus</location>
    </subcellularLocation>
</comment>
<comment type="alternative products">
    <event type="alternative splicing"/>
    <isoform>
        <id>A1L4X7-1</id>
        <name>1</name>
        <sequence type="displayed"/>
    </isoform>
    <text>A number of isoforms are produced. According to EST sequences.</text>
</comment>
<comment type="domain">
    <text evidence="5">The PPC domain mediates interactions between AHL proteins.</text>
</comment>
<comment type="sequence caution" evidence="7">
    <conflict type="erroneous gene model prediction">
        <sequence resource="EMBL-CDS" id="AAF04889"/>
    </conflict>
</comment>
<comment type="sequence caution" evidence="7">
    <conflict type="erroneous gene model prediction">
        <sequence resource="EMBL-CDS" id="FAA00285"/>
    </conflict>
</comment>
<protein>
    <recommendedName>
        <fullName evidence="11">AT-hook motif nuclear-localized protein 14</fullName>
    </recommendedName>
</protein>
<feature type="chain" id="PRO_0000432032" description="AT-hook motif nuclear-localized protein 14">
    <location>
        <begin position="1"/>
        <end position="411"/>
    </location>
</feature>
<feature type="domain" description="PPC" evidence="3">
    <location>
        <begin position="165"/>
        <end position="305"/>
    </location>
</feature>
<feature type="DNA-binding region" description="A.T hook" evidence="2">
    <location>
        <begin position="105"/>
        <end position="117"/>
    </location>
</feature>
<feature type="region of interest" description="Disordered" evidence="4">
    <location>
        <begin position="1"/>
        <end position="32"/>
    </location>
</feature>
<feature type="region of interest" description="Disordered" evidence="4">
    <location>
        <begin position="54"/>
        <end position="164"/>
    </location>
</feature>
<feature type="region of interest" description="Disordered" evidence="4">
    <location>
        <begin position="289"/>
        <end position="348"/>
    </location>
</feature>
<feature type="region of interest" description="Disordered" evidence="4">
    <location>
        <begin position="366"/>
        <end position="411"/>
    </location>
</feature>
<feature type="short sequence motif" description="Bipartite nuclear localization signal" evidence="7">
    <location>
        <begin position="105"/>
        <end position="113"/>
    </location>
</feature>
<feature type="compositionally biased region" description="Basic residues" evidence="4">
    <location>
        <begin position="7"/>
        <end position="19"/>
    </location>
</feature>
<feature type="compositionally biased region" description="Low complexity" evidence="4">
    <location>
        <begin position="20"/>
        <end position="29"/>
    </location>
</feature>
<feature type="compositionally biased region" description="Polar residues" evidence="4">
    <location>
        <begin position="54"/>
        <end position="66"/>
    </location>
</feature>
<feature type="compositionally biased region" description="Low complexity" evidence="4">
    <location>
        <begin position="120"/>
        <end position="135"/>
    </location>
</feature>
<feature type="compositionally biased region" description="Low complexity" evidence="4">
    <location>
        <begin position="144"/>
        <end position="159"/>
    </location>
</feature>
<feature type="compositionally biased region" description="Polar residues" evidence="4">
    <location>
        <begin position="306"/>
        <end position="315"/>
    </location>
</feature>
<feature type="compositionally biased region" description="Gly residues" evidence="4">
    <location>
        <begin position="374"/>
        <end position="390"/>
    </location>
</feature>